<protein>
    <recommendedName>
        <fullName evidence="1">Recombination-associated protein RdgC</fullName>
    </recommendedName>
</protein>
<feature type="chain" id="PRO_1000021234" description="Recombination-associated protein RdgC">
    <location>
        <begin position="1"/>
        <end position="304"/>
    </location>
</feature>
<keyword id="KW-0963">Cytoplasm</keyword>
<keyword id="KW-0233">DNA recombination</keyword>
<sequence length="304" mass="33591">MWFKNLTLYRFNKPFSIETEALETALADFTFSPCGSQDVSKFGFSNALGKQGSTLVHSANNRHLICVTKEEKILPGQVIKESLEEKVAQIEDEENRKLAKKEKDALKDEIITSLLPRAFSRRSQTRALILPELEMILVDSSSATKAEELLALLRKALGSLPVIPLSFKAPVEANLTQWLKDGSAPLPFEMQDEAELKSAADEGGIVRFKQQDLKEDEVLAHLETGKEVHKLALHFGQSIALLLQSDASVKRLKFSEEFRAGNDELGNEDPMARLDADFALMGSELVALMHALVSALGGLEETQA</sequence>
<gene>
    <name evidence="1" type="primary">rdgC</name>
    <name type="ordered locus">Shewana3_2881</name>
</gene>
<reference key="1">
    <citation type="submission" date="2006-09" db="EMBL/GenBank/DDBJ databases">
        <title>Complete sequence of chromosome 1 of Shewanella sp. ANA-3.</title>
        <authorList>
            <person name="Copeland A."/>
            <person name="Lucas S."/>
            <person name="Lapidus A."/>
            <person name="Barry K."/>
            <person name="Detter J.C."/>
            <person name="Glavina del Rio T."/>
            <person name="Hammon N."/>
            <person name="Israni S."/>
            <person name="Dalin E."/>
            <person name="Tice H."/>
            <person name="Pitluck S."/>
            <person name="Chertkov O."/>
            <person name="Brettin T."/>
            <person name="Bruce D."/>
            <person name="Han C."/>
            <person name="Tapia R."/>
            <person name="Gilna P."/>
            <person name="Schmutz J."/>
            <person name="Larimer F."/>
            <person name="Land M."/>
            <person name="Hauser L."/>
            <person name="Kyrpides N."/>
            <person name="Kim E."/>
            <person name="Newman D."/>
            <person name="Salticov C."/>
            <person name="Konstantinidis K."/>
            <person name="Klappenback J."/>
            <person name="Tiedje J."/>
            <person name="Richardson P."/>
        </authorList>
    </citation>
    <scope>NUCLEOTIDE SEQUENCE [LARGE SCALE GENOMIC DNA]</scope>
    <source>
        <strain>ANA-3</strain>
    </source>
</reference>
<dbReference type="EMBL" id="CP000469">
    <property type="protein sequence ID" value="ABK49108.1"/>
    <property type="molecule type" value="Genomic_DNA"/>
</dbReference>
<dbReference type="RefSeq" id="WP_011717747.1">
    <property type="nucleotide sequence ID" value="NC_008577.1"/>
</dbReference>
<dbReference type="SMR" id="A0KZ89"/>
<dbReference type="STRING" id="94122.Shewana3_2881"/>
<dbReference type="KEGG" id="shn:Shewana3_2881"/>
<dbReference type="eggNOG" id="COG2974">
    <property type="taxonomic scope" value="Bacteria"/>
</dbReference>
<dbReference type="HOGENOM" id="CLU_052038_1_1_6"/>
<dbReference type="OrthoDB" id="5290530at2"/>
<dbReference type="Proteomes" id="UP000002589">
    <property type="component" value="Chromosome"/>
</dbReference>
<dbReference type="GO" id="GO:0043590">
    <property type="term" value="C:bacterial nucleoid"/>
    <property type="evidence" value="ECO:0007669"/>
    <property type="project" value="TreeGrafter"/>
</dbReference>
<dbReference type="GO" id="GO:0005737">
    <property type="term" value="C:cytoplasm"/>
    <property type="evidence" value="ECO:0007669"/>
    <property type="project" value="UniProtKB-UniRule"/>
</dbReference>
<dbReference type="GO" id="GO:0003690">
    <property type="term" value="F:double-stranded DNA binding"/>
    <property type="evidence" value="ECO:0007669"/>
    <property type="project" value="TreeGrafter"/>
</dbReference>
<dbReference type="GO" id="GO:0006310">
    <property type="term" value="P:DNA recombination"/>
    <property type="evidence" value="ECO:0007669"/>
    <property type="project" value="UniProtKB-UniRule"/>
</dbReference>
<dbReference type="GO" id="GO:0000018">
    <property type="term" value="P:regulation of DNA recombination"/>
    <property type="evidence" value="ECO:0007669"/>
    <property type="project" value="TreeGrafter"/>
</dbReference>
<dbReference type="HAMAP" id="MF_00194">
    <property type="entry name" value="RdgC"/>
    <property type="match status" value="1"/>
</dbReference>
<dbReference type="InterPro" id="IPR007476">
    <property type="entry name" value="RdgC"/>
</dbReference>
<dbReference type="NCBIfam" id="NF001462">
    <property type="entry name" value="PRK00321.1-3"/>
    <property type="match status" value="1"/>
</dbReference>
<dbReference type="NCBIfam" id="NF001464">
    <property type="entry name" value="PRK00321.1-5"/>
    <property type="match status" value="1"/>
</dbReference>
<dbReference type="PANTHER" id="PTHR38103">
    <property type="entry name" value="RECOMBINATION-ASSOCIATED PROTEIN RDGC"/>
    <property type="match status" value="1"/>
</dbReference>
<dbReference type="PANTHER" id="PTHR38103:SF1">
    <property type="entry name" value="RECOMBINATION-ASSOCIATED PROTEIN RDGC"/>
    <property type="match status" value="1"/>
</dbReference>
<dbReference type="Pfam" id="PF04381">
    <property type="entry name" value="RdgC"/>
    <property type="match status" value="1"/>
</dbReference>
<name>RDGC_SHESA</name>
<proteinExistence type="inferred from homology"/>
<organism>
    <name type="scientific">Shewanella sp. (strain ANA-3)</name>
    <dbReference type="NCBI Taxonomy" id="94122"/>
    <lineage>
        <taxon>Bacteria</taxon>
        <taxon>Pseudomonadati</taxon>
        <taxon>Pseudomonadota</taxon>
        <taxon>Gammaproteobacteria</taxon>
        <taxon>Alteromonadales</taxon>
        <taxon>Shewanellaceae</taxon>
        <taxon>Shewanella</taxon>
    </lineage>
</organism>
<comment type="function">
    <text evidence="1">May be involved in recombination.</text>
</comment>
<comment type="subcellular location">
    <subcellularLocation>
        <location evidence="1">Cytoplasm</location>
        <location evidence="1">Nucleoid</location>
    </subcellularLocation>
</comment>
<comment type="similarity">
    <text evidence="1">Belongs to the RdgC family.</text>
</comment>
<accession>A0KZ89</accession>
<evidence type="ECO:0000255" key="1">
    <source>
        <dbReference type="HAMAP-Rule" id="MF_00194"/>
    </source>
</evidence>